<reference key="1">
    <citation type="submission" date="2007-08" db="EMBL/GenBank/DDBJ databases">
        <authorList>
            <consortium name="NIH - Zebrafish Gene Collection (ZGC) project"/>
        </authorList>
    </citation>
    <scope>NUCLEOTIDE SEQUENCE [LARGE SCALE MRNA]</scope>
    <source>
        <strain>AB</strain>
    </source>
</reference>
<comment type="function">
    <text evidence="1">Pkc-related serine/threonine-protein kinase and Rho/Rac effector protein that participates in specific signal transduction responses in the cell. May play a role in the regulation of cell cycle progression, actin cytoskeleton assembly, cell migration, cell adhesion and transcription activation signaling processes (By similarity).</text>
</comment>
<comment type="catalytic activity">
    <reaction>
        <text>L-seryl-[protein] + ATP = O-phospho-L-seryl-[protein] + ADP + H(+)</text>
        <dbReference type="Rhea" id="RHEA:17989"/>
        <dbReference type="Rhea" id="RHEA-COMP:9863"/>
        <dbReference type="Rhea" id="RHEA-COMP:11604"/>
        <dbReference type="ChEBI" id="CHEBI:15378"/>
        <dbReference type="ChEBI" id="CHEBI:29999"/>
        <dbReference type="ChEBI" id="CHEBI:30616"/>
        <dbReference type="ChEBI" id="CHEBI:83421"/>
        <dbReference type="ChEBI" id="CHEBI:456216"/>
        <dbReference type="EC" id="2.7.11.13"/>
    </reaction>
</comment>
<comment type="catalytic activity">
    <reaction>
        <text>L-threonyl-[protein] + ATP = O-phospho-L-threonyl-[protein] + ADP + H(+)</text>
        <dbReference type="Rhea" id="RHEA:46608"/>
        <dbReference type="Rhea" id="RHEA-COMP:11060"/>
        <dbReference type="Rhea" id="RHEA-COMP:11605"/>
        <dbReference type="ChEBI" id="CHEBI:15378"/>
        <dbReference type="ChEBI" id="CHEBI:30013"/>
        <dbReference type="ChEBI" id="CHEBI:30616"/>
        <dbReference type="ChEBI" id="CHEBI:61977"/>
        <dbReference type="ChEBI" id="CHEBI:456216"/>
        <dbReference type="EC" id="2.7.11.13"/>
    </reaction>
</comment>
<comment type="activity regulation">
    <text evidence="1">Kinase activity is activated upon binding to GTP-bound Rho/Rac GTPases. Activated by lipids, particularly cardiolipin and to a lesser extent by other acidic phospholipids and unsaturated fatty acids. Two specific sites, Thr-809 (activation loop of the kinase domain) and Thr-951 (turn motif), may be needed to be phosphorylated for its full activation (By similarity).</text>
</comment>
<comment type="subcellular location">
    <subcellularLocation>
        <location evidence="1">Cytoplasm</location>
    </subcellularLocation>
    <subcellularLocation>
        <location evidence="1">Nucleus</location>
    </subcellularLocation>
    <subcellularLocation>
        <location evidence="1">Membrane</location>
    </subcellularLocation>
    <subcellularLocation>
        <location evidence="1">Cell projection</location>
        <location evidence="1">Lamellipodium</location>
    </subcellularLocation>
    <subcellularLocation>
        <location evidence="1">Cytoplasm</location>
        <location evidence="1">Cytoskeleton</location>
    </subcellularLocation>
    <subcellularLocation>
        <location evidence="1">Cleavage furrow</location>
    </subcellularLocation>
    <subcellularLocation>
        <location evidence="1">Midbody</location>
    </subcellularLocation>
    <subcellularLocation>
        <location evidence="1">Cell junction</location>
    </subcellularLocation>
</comment>
<comment type="PTM">
    <text evidence="1">Autophosphorylated. Phosphorylated.</text>
</comment>
<comment type="PTM">
    <text evidence="1">Proteolytically cleaved.</text>
</comment>
<comment type="similarity">
    <text evidence="8">Belongs to the protein kinase superfamily. AGC Ser/Thr protein kinase family. PKC subfamily.</text>
</comment>
<keyword id="KW-0067">ATP-binding</keyword>
<keyword id="KW-0130">Cell adhesion</keyword>
<keyword id="KW-0131">Cell cycle</keyword>
<keyword id="KW-0132">Cell division</keyword>
<keyword id="KW-0965">Cell junction</keyword>
<keyword id="KW-0966">Cell projection</keyword>
<keyword id="KW-0175">Coiled coil</keyword>
<keyword id="KW-0963">Cytoplasm</keyword>
<keyword id="KW-0206">Cytoskeleton</keyword>
<keyword id="KW-0418">Kinase</keyword>
<keyword id="KW-0472">Membrane</keyword>
<keyword id="KW-0547">Nucleotide-binding</keyword>
<keyword id="KW-0539">Nucleus</keyword>
<keyword id="KW-0597">Phosphoprotein</keyword>
<keyword id="KW-1185">Reference proteome</keyword>
<keyword id="KW-0677">Repeat</keyword>
<keyword id="KW-0723">Serine/threonine-protein kinase</keyword>
<keyword id="KW-0804">Transcription</keyword>
<keyword id="KW-0805">Transcription regulation</keyword>
<keyword id="KW-0808">Transferase</keyword>
<accession>A7MBL8</accession>
<dbReference type="EC" id="2.7.11.13"/>
<dbReference type="EMBL" id="BC151829">
    <property type="protein sequence ID" value="AAI51830.1"/>
    <property type="molecule type" value="mRNA"/>
</dbReference>
<dbReference type="RefSeq" id="NP_001277108.1">
    <property type="nucleotide sequence ID" value="NM_001290179.1"/>
</dbReference>
<dbReference type="SMR" id="A7MBL8"/>
<dbReference type="FunCoup" id="A7MBL8">
    <property type="interactions" value="1598"/>
</dbReference>
<dbReference type="STRING" id="7955.ENSDARP00000147780"/>
<dbReference type="PaxDb" id="7955-ENSDARP00000100346"/>
<dbReference type="PeptideAtlas" id="A7MBL8"/>
<dbReference type="GeneID" id="567134"/>
<dbReference type="KEGG" id="dre:567134"/>
<dbReference type="AGR" id="ZFIN:ZDB-GENE-061013-393"/>
<dbReference type="CTD" id="567134"/>
<dbReference type="ZFIN" id="ZDB-GENE-061013-393">
    <property type="gene designation" value="pkn2b"/>
</dbReference>
<dbReference type="eggNOG" id="KOG0694">
    <property type="taxonomic scope" value="Eukaryota"/>
</dbReference>
<dbReference type="InParanoid" id="A7MBL8"/>
<dbReference type="OrthoDB" id="63267at2759"/>
<dbReference type="PhylomeDB" id="A7MBL8"/>
<dbReference type="Reactome" id="R-DRE-5625740">
    <property type="pathway name" value="RHO GTPases activate PKNs"/>
</dbReference>
<dbReference type="Reactome" id="R-DRE-8980692">
    <property type="pathway name" value="RHOA GTPase cycle"/>
</dbReference>
<dbReference type="Reactome" id="R-DRE-9856530">
    <property type="pathway name" value="High laminar flow shear stress activates signaling by PIEZO1 and PECAM1:CDH5:KDR in endothelial cells"/>
</dbReference>
<dbReference type="PRO" id="PR:A7MBL8"/>
<dbReference type="Proteomes" id="UP000000437">
    <property type="component" value="Alternate scaffold 6"/>
</dbReference>
<dbReference type="Proteomes" id="UP000000437">
    <property type="component" value="Chromosome 6"/>
</dbReference>
<dbReference type="GO" id="GO:0070161">
    <property type="term" value="C:anchoring junction"/>
    <property type="evidence" value="ECO:0007669"/>
    <property type="project" value="UniProtKB-SubCell"/>
</dbReference>
<dbReference type="GO" id="GO:0032154">
    <property type="term" value="C:cleavage furrow"/>
    <property type="evidence" value="ECO:0007669"/>
    <property type="project" value="UniProtKB-SubCell"/>
</dbReference>
<dbReference type="GO" id="GO:0005737">
    <property type="term" value="C:cytoplasm"/>
    <property type="evidence" value="ECO:0007669"/>
    <property type="project" value="UniProtKB-SubCell"/>
</dbReference>
<dbReference type="GO" id="GO:0005856">
    <property type="term" value="C:cytoskeleton"/>
    <property type="evidence" value="ECO:0007669"/>
    <property type="project" value="UniProtKB-SubCell"/>
</dbReference>
<dbReference type="GO" id="GO:0030027">
    <property type="term" value="C:lamellipodium"/>
    <property type="evidence" value="ECO:0007669"/>
    <property type="project" value="UniProtKB-SubCell"/>
</dbReference>
<dbReference type="GO" id="GO:0030496">
    <property type="term" value="C:midbody"/>
    <property type="evidence" value="ECO:0007669"/>
    <property type="project" value="UniProtKB-SubCell"/>
</dbReference>
<dbReference type="GO" id="GO:0005634">
    <property type="term" value="C:nucleus"/>
    <property type="evidence" value="ECO:0007669"/>
    <property type="project" value="UniProtKB-SubCell"/>
</dbReference>
<dbReference type="GO" id="GO:0005524">
    <property type="term" value="F:ATP binding"/>
    <property type="evidence" value="ECO:0007669"/>
    <property type="project" value="UniProtKB-KW"/>
</dbReference>
<dbReference type="GO" id="GO:0004697">
    <property type="term" value="F:diacylglycerol-dependent serine/threonine kinase activity"/>
    <property type="evidence" value="ECO:0007669"/>
    <property type="project" value="UniProtKB-EC"/>
</dbReference>
<dbReference type="GO" id="GO:0106310">
    <property type="term" value="F:protein serine kinase activity"/>
    <property type="evidence" value="ECO:0007669"/>
    <property type="project" value="RHEA"/>
</dbReference>
<dbReference type="GO" id="GO:0004674">
    <property type="term" value="F:protein serine/threonine kinase activity"/>
    <property type="evidence" value="ECO:0000318"/>
    <property type="project" value="GO_Central"/>
</dbReference>
<dbReference type="GO" id="GO:0031267">
    <property type="term" value="F:small GTPase binding"/>
    <property type="evidence" value="ECO:0007669"/>
    <property type="project" value="InterPro"/>
</dbReference>
<dbReference type="GO" id="GO:0007155">
    <property type="term" value="P:cell adhesion"/>
    <property type="evidence" value="ECO:0007669"/>
    <property type="project" value="UniProtKB-KW"/>
</dbReference>
<dbReference type="GO" id="GO:0051301">
    <property type="term" value="P:cell division"/>
    <property type="evidence" value="ECO:0007669"/>
    <property type="project" value="UniProtKB-KW"/>
</dbReference>
<dbReference type="GO" id="GO:0035556">
    <property type="term" value="P:intracellular signal transduction"/>
    <property type="evidence" value="ECO:0000318"/>
    <property type="project" value="GO_Central"/>
</dbReference>
<dbReference type="CDD" id="cd08687">
    <property type="entry name" value="C2_PKN-like"/>
    <property type="match status" value="1"/>
</dbReference>
<dbReference type="CDD" id="cd11631">
    <property type="entry name" value="HR1_PKN2_2"/>
    <property type="match status" value="1"/>
</dbReference>
<dbReference type="CDD" id="cd11622">
    <property type="entry name" value="HR1_PKN_1"/>
    <property type="match status" value="1"/>
</dbReference>
<dbReference type="CDD" id="cd05589">
    <property type="entry name" value="STKc_PKN"/>
    <property type="match status" value="1"/>
</dbReference>
<dbReference type="FunFam" id="1.10.287.160:FF:000001">
    <property type="entry name" value="Putative serine/threonine-protein kinase N2"/>
    <property type="match status" value="1"/>
</dbReference>
<dbReference type="FunFam" id="1.10.287.160:FF:000002">
    <property type="entry name" value="Putative serine/threonine-protein kinase N2"/>
    <property type="match status" value="1"/>
</dbReference>
<dbReference type="FunFam" id="1.10.287.160:FF:000003">
    <property type="entry name" value="Putative serine/threonine-protein kinase N2"/>
    <property type="match status" value="1"/>
</dbReference>
<dbReference type="FunFam" id="3.30.200.20:FF:000058">
    <property type="entry name" value="Putative serine/threonine-protein kinase N2"/>
    <property type="match status" value="1"/>
</dbReference>
<dbReference type="FunFam" id="1.10.510.10:FF:000038">
    <property type="entry name" value="serine/threonine-protein kinase N2 isoform X1"/>
    <property type="match status" value="1"/>
</dbReference>
<dbReference type="Gene3D" id="1.10.287.160">
    <property type="entry name" value="HR1 repeat"/>
    <property type="match status" value="3"/>
</dbReference>
<dbReference type="Gene3D" id="3.30.200.20">
    <property type="entry name" value="Phosphorylase Kinase, domain 1"/>
    <property type="match status" value="1"/>
</dbReference>
<dbReference type="Gene3D" id="1.10.510.10">
    <property type="entry name" value="Transferase(Phosphotransferase) domain 1"/>
    <property type="match status" value="1"/>
</dbReference>
<dbReference type="InterPro" id="IPR000961">
    <property type="entry name" value="AGC-kinase_C"/>
</dbReference>
<dbReference type="InterPro" id="IPR000008">
    <property type="entry name" value="C2_dom"/>
</dbReference>
<dbReference type="InterPro" id="IPR035892">
    <property type="entry name" value="C2_domain_sf"/>
</dbReference>
<dbReference type="InterPro" id="IPR037784">
    <property type="entry name" value="C2_PKN"/>
</dbReference>
<dbReference type="InterPro" id="IPR011072">
    <property type="entry name" value="HR1_rho-bd"/>
</dbReference>
<dbReference type="InterPro" id="IPR036274">
    <property type="entry name" value="HR1_rpt_sf"/>
</dbReference>
<dbReference type="InterPro" id="IPR011009">
    <property type="entry name" value="Kinase-like_dom_sf"/>
</dbReference>
<dbReference type="InterPro" id="IPR017892">
    <property type="entry name" value="Pkinase_C"/>
</dbReference>
<dbReference type="InterPro" id="IPR037313">
    <property type="entry name" value="PKN_HR1_1"/>
</dbReference>
<dbReference type="InterPro" id="IPR000719">
    <property type="entry name" value="Prot_kinase_dom"/>
</dbReference>
<dbReference type="InterPro" id="IPR017441">
    <property type="entry name" value="Protein_kinase_ATP_BS"/>
</dbReference>
<dbReference type="InterPro" id="IPR008271">
    <property type="entry name" value="Ser/Thr_kinase_AS"/>
</dbReference>
<dbReference type="PANTHER" id="PTHR24351">
    <property type="entry name" value="RIBOSOMAL PROTEIN S6 KINASE"/>
    <property type="match status" value="1"/>
</dbReference>
<dbReference type="Pfam" id="PF02185">
    <property type="entry name" value="HR1"/>
    <property type="match status" value="3"/>
</dbReference>
<dbReference type="Pfam" id="PF00069">
    <property type="entry name" value="Pkinase"/>
    <property type="match status" value="1"/>
</dbReference>
<dbReference type="Pfam" id="PF00433">
    <property type="entry name" value="Pkinase_C"/>
    <property type="match status" value="1"/>
</dbReference>
<dbReference type="SMART" id="SM00239">
    <property type="entry name" value="C2"/>
    <property type="match status" value="1"/>
</dbReference>
<dbReference type="SMART" id="SM00742">
    <property type="entry name" value="Hr1"/>
    <property type="match status" value="3"/>
</dbReference>
<dbReference type="SMART" id="SM00133">
    <property type="entry name" value="S_TK_X"/>
    <property type="match status" value="1"/>
</dbReference>
<dbReference type="SMART" id="SM00220">
    <property type="entry name" value="S_TKc"/>
    <property type="match status" value="1"/>
</dbReference>
<dbReference type="SUPFAM" id="SSF49562">
    <property type="entry name" value="C2 domain (Calcium/lipid-binding domain, CaLB)"/>
    <property type="match status" value="1"/>
</dbReference>
<dbReference type="SUPFAM" id="SSF46585">
    <property type="entry name" value="HR1 repeat"/>
    <property type="match status" value="3"/>
</dbReference>
<dbReference type="SUPFAM" id="SSF56112">
    <property type="entry name" value="Protein kinase-like (PK-like)"/>
    <property type="match status" value="1"/>
</dbReference>
<dbReference type="PROSITE" id="PS51285">
    <property type="entry name" value="AGC_KINASE_CTER"/>
    <property type="match status" value="1"/>
</dbReference>
<dbReference type="PROSITE" id="PS50004">
    <property type="entry name" value="C2"/>
    <property type="match status" value="1"/>
</dbReference>
<dbReference type="PROSITE" id="PS00107">
    <property type="entry name" value="PROTEIN_KINASE_ATP"/>
    <property type="match status" value="1"/>
</dbReference>
<dbReference type="PROSITE" id="PS50011">
    <property type="entry name" value="PROTEIN_KINASE_DOM"/>
    <property type="match status" value="1"/>
</dbReference>
<dbReference type="PROSITE" id="PS00108">
    <property type="entry name" value="PROTEIN_KINASE_ST"/>
    <property type="match status" value="1"/>
</dbReference>
<dbReference type="PROSITE" id="PS51860">
    <property type="entry name" value="REM_1"/>
    <property type="match status" value="3"/>
</dbReference>
<sequence length="977" mass="110657">MAADSVQNDARGPMVSGRLDFDQNLDFSDTMVQKNLDEIKDQIKREIRKELKIKEGAENLRKVTTDKKSLAYVDNMLKKSNKKVEELHQELQELNAHIVVKDPEEVEEYPLTPDTPKSETRMSTNSNRLAALKKQADIELKVKQGAEDMIQMYSNGSSKDRKLLAAAQQMLQDSKTKIEFIRMQILKASQTSEINYENNDVTTSKPIISPLDLRIEELRHHYRIESAVADGAKNVMKLLGTGKVTEKKAHSEAQARLNESSQKLDLLKFSLEQRLSELPKNHPKGTLIMEELAMVASPPNSPRQSIMSTSNQYSTVAKPAALTGTLDVRLMGCQDLLENVPGRSKTASVSLPGWSPSEARSSFMSRGNKNKSGSSRTLSKSDDLSNEISAVLKLDNTVVGQTHWKPVSNQSWDQKFTLELDRSRELEIAVYWRDWRSLCAVKFLRLEDFLDNQRHGMCLYLEPQGTLFAEVTFFNPVIERRPKLQRQKKIFSKQQGKTFLRAPQMNINIATWGRLVRRAIPSVNTSFSPQAADLGSAMSHETAPMGHPDAHSLPSDPTVTKLDFDKAVTPPSKRNSIEVEIEETAPPDKISDGKEVQDALATFDFLNNTVAKPDYDSLVEHEQPGLELTEIQRKTEIREEEEVQFSLSDFKCVAVLGRGHFGKVLLADYKTTGEMFAIKALKKGDIVARDEVDSLMCEKRIFETVNSVRHPFLVNLFACFQTKEHVCFVMEYAAGGDLMMHIHADVFSETRSVFYAACVVLGLQFLHDHKIVYRDLKLDNLLLDTEGYVKIADFGLCKEGMGFKDRTSTFCGTPEFLAPEVLTETSYTRAVDWWGLGVLIFEMLVGESPFPGDDEEEVFDSIVNDEVRYPKYLSTEAISIMRRLLRRNPERRLGAGERDAEEVKRHPFFRDMDWPGLLAKKIRPPFVPTITSREDVSNFDDEFTSEAPILTPPREPRILTLGEQDLFADFDYIADWC</sequence>
<name>PKN2_DANRE</name>
<proteinExistence type="evidence at transcript level"/>
<organism>
    <name type="scientific">Danio rerio</name>
    <name type="common">Zebrafish</name>
    <name type="synonym">Brachydanio rerio</name>
    <dbReference type="NCBI Taxonomy" id="7955"/>
    <lineage>
        <taxon>Eukaryota</taxon>
        <taxon>Metazoa</taxon>
        <taxon>Chordata</taxon>
        <taxon>Craniata</taxon>
        <taxon>Vertebrata</taxon>
        <taxon>Euteleostomi</taxon>
        <taxon>Actinopterygii</taxon>
        <taxon>Neopterygii</taxon>
        <taxon>Teleostei</taxon>
        <taxon>Ostariophysi</taxon>
        <taxon>Cypriniformes</taxon>
        <taxon>Danionidae</taxon>
        <taxon>Danioninae</taxon>
        <taxon>Danio</taxon>
    </lineage>
</organism>
<protein>
    <recommendedName>
        <fullName>Serine/threonine-protein kinase N2</fullName>
        <ecNumber>2.7.11.13</ecNumber>
    </recommendedName>
    <alternativeName>
        <fullName>PKN gamma</fullName>
    </alternativeName>
    <alternativeName>
        <fullName>Protein kinase C-like 2</fullName>
    </alternativeName>
    <alternativeName>
        <fullName>Protein-kinase C-related kinase 2</fullName>
    </alternativeName>
</protein>
<feature type="chain" id="PRO_0000415276" description="Serine/threonine-protein kinase N2">
    <location>
        <begin position="1"/>
        <end position="977"/>
    </location>
</feature>
<feature type="domain" description="REM-1 1" evidence="5">
    <location>
        <begin position="24"/>
        <end position="100"/>
    </location>
</feature>
<feature type="domain" description="REM-1 2" evidence="5">
    <location>
        <begin position="114"/>
        <end position="194"/>
    </location>
</feature>
<feature type="domain" description="REM-1 3" evidence="5">
    <location>
        <begin position="200"/>
        <end position="280"/>
    </location>
</feature>
<feature type="domain" description="C2" evidence="2">
    <location>
        <begin position="298"/>
        <end position="468"/>
    </location>
</feature>
<feature type="domain" description="Protein kinase" evidence="3">
    <location>
        <begin position="650"/>
        <end position="909"/>
    </location>
</feature>
<feature type="domain" description="AGC-kinase C-terminal" evidence="4">
    <location>
        <begin position="910"/>
        <end position="977"/>
    </location>
</feature>
<feature type="region of interest" description="Disordered" evidence="7">
    <location>
        <begin position="342"/>
        <end position="381"/>
    </location>
</feature>
<feature type="region of interest" description="Disordered" evidence="7">
    <location>
        <begin position="531"/>
        <end position="576"/>
    </location>
</feature>
<feature type="compositionally biased region" description="Polar residues" evidence="7">
    <location>
        <begin position="358"/>
        <end position="378"/>
    </location>
</feature>
<feature type="active site" description="Proton acceptor" evidence="3 6">
    <location>
        <position position="775"/>
    </location>
</feature>
<feature type="binding site" evidence="3">
    <location>
        <begin position="656"/>
        <end position="664"/>
    </location>
    <ligand>
        <name>ATP</name>
        <dbReference type="ChEBI" id="CHEBI:30616"/>
    </ligand>
</feature>
<feature type="binding site" evidence="3">
    <location>
        <position position="679"/>
    </location>
    <ligand>
        <name>ATP</name>
        <dbReference type="ChEBI" id="CHEBI:30616"/>
    </ligand>
</feature>
<gene>
    <name type="primary">pkn2</name>
    <name type="synonym">prk2</name>
    <name type="synonym">prkcl2</name>
    <name type="ORF">zgc:153916</name>
</gene>
<evidence type="ECO:0000250" key="1"/>
<evidence type="ECO:0000255" key="2">
    <source>
        <dbReference type="PROSITE-ProRule" id="PRU00041"/>
    </source>
</evidence>
<evidence type="ECO:0000255" key="3">
    <source>
        <dbReference type="PROSITE-ProRule" id="PRU00159"/>
    </source>
</evidence>
<evidence type="ECO:0000255" key="4">
    <source>
        <dbReference type="PROSITE-ProRule" id="PRU00618"/>
    </source>
</evidence>
<evidence type="ECO:0000255" key="5">
    <source>
        <dbReference type="PROSITE-ProRule" id="PRU01207"/>
    </source>
</evidence>
<evidence type="ECO:0000255" key="6">
    <source>
        <dbReference type="PROSITE-ProRule" id="PRU10027"/>
    </source>
</evidence>
<evidence type="ECO:0000256" key="7">
    <source>
        <dbReference type="SAM" id="MobiDB-lite"/>
    </source>
</evidence>
<evidence type="ECO:0000305" key="8"/>